<keyword id="KW-0341">Growth regulation</keyword>
<keyword id="KW-1185">Reference proteome</keyword>
<dbReference type="EMBL" id="AY702437">
    <property type="protein sequence ID" value="AAU07934.1"/>
    <property type="molecule type" value="mRNA"/>
</dbReference>
<dbReference type="EMBL" id="AB365455">
    <property type="protein sequence ID" value="BAI49624.1"/>
    <property type="molecule type" value="Genomic_DNA"/>
</dbReference>
<dbReference type="EMBL" id="CM000134">
    <property type="protein sequence ID" value="EEC84922.1"/>
    <property type="molecule type" value="Genomic_DNA"/>
</dbReference>
<dbReference type="SMR" id="Q66V57"/>
<dbReference type="STRING" id="39946.Q66V57"/>
<dbReference type="EnsemblPlants" id="BGIOSGA029394-TA">
    <property type="protein sequence ID" value="BGIOSGA029394-PA"/>
    <property type="gene ID" value="BGIOSGA029394"/>
</dbReference>
<dbReference type="EnsemblPlants" id="OsGoSa_09g0017250.02">
    <property type="protein sequence ID" value="OsGoSa_09g0017250.02"/>
    <property type="gene ID" value="OsGoSa_09g0017250"/>
</dbReference>
<dbReference type="EnsemblPlants" id="OsIR64_09g0017390.02">
    <property type="protein sequence ID" value="OsIR64_09g0017390.02"/>
    <property type="gene ID" value="OsIR64_09g0017390"/>
</dbReference>
<dbReference type="EnsemblPlants" id="OsKYG_09g0017210.01">
    <property type="protein sequence ID" value="OsKYG_09g0017210.01"/>
    <property type="gene ID" value="OsKYG_09g0017210"/>
</dbReference>
<dbReference type="EnsemblPlants" id="OsLaMu_09g0017290.01">
    <property type="protein sequence ID" value="OsLaMu_09g0017290.01"/>
    <property type="gene ID" value="OsLaMu_09g0017290"/>
</dbReference>
<dbReference type="EnsemblPlants" id="OsLima_09g0017430.02">
    <property type="protein sequence ID" value="OsLima_09g0017430.02"/>
    <property type="gene ID" value="OsLima_09g0017430"/>
</dbReference>
<dbReference type="EnsemblPlants" id="OsLiXu_09g0017160.01">
    <property type="protein sequence ID" value="OsLiXu_09g0017160.01"/>
    <property type="gene ID" value="OsLiXu_09g0017160"/>
</dbReference>
<dbReference type="EnsemblPlants" id="OsMH63_09G017760_02">
    <property type="protein sequence ID" value="OsMH63_09G017760_02"/>
    <property type="gene ID" value="OsMH63_09G017760"/>
</dbReference>
<dbReference type="EnsemblPlants" id="OsPr106_09g0017560.01">
    <property type="protein sequence ID" value="OsPr106_09g0017560.01"/>
    <property type="gene ID" value="OsPr106_09g0017560"/>
</dbReference>
<dbReference type="Gramene" id="BGIOSGA029394-TA">
    <property type="protein sequence ID" value="BGIOSGA029394-PA"/>
    <property type="gene ID" value="BGIOSGA029394"/>
</dbReference>
<dbReference type="Gramene" id="OsGoSa_09g0017250.02">
    <property type="protein sequence ID" value="OsGoSa_09g0017250.02"/>
    <property type="gene ID" value="OsGoSa_09g0017250"/>
</dbReference>
<dbReference type="Gramene" id="OsIR64_09g0017390.02">
    <property type="protein sequence ID" value="OsIR64_09g0017390.02"/>
    <property type="gene ID" value="OsIR64_09g0017390"/>
</dbReference>
<dbReference type="Gramene" id="OsKYG_09g0017210.01">
    <property type="protein sequence ID" value="OsKYG_09g0017210.01"/>
    <property type="gene ID" value="OsKYG_09g0017210"/>
</dbReference>
<dbReference type="Gramene" id="OsLaMu_09g0017290.01">
    <property type="protein sequence ID" value="OsLaMu_09g0017290.01"/>
    <property type="gene ID" value="OsLaMu_09g0017290"/>
</dbReference>
<dbReference type="Gramene" id="OsLima_09g0017430.02">
    <property type="protein sequence ID" value="OsLima_09g0017430.02"/>
    <property type="gene ID" value="OsLima_09g0017430"/>
</dbReference>
<dbReference type="Gramene" id="OsLiXu_09g0017160.01">
    <property type="protein sequence ID" value="OsLiXu_09g0017160.01"/>
    <property type="gene ID" value="OsLiXu_09g0017160"/>
</dbReference>
<dbReference type="Gramene" id="OsMH63_09G017760_02">
    <property type="protein sequence ID" value="OsMH63_09G017760_02"/>
    <property type="gene ID" value="OsMH63_09G017760"/>
</dbReference>
<dbReference type="Gramene" id="OsPr106_09g0017560.01">
    <property type="protein sequence ID" value="OsPr106_09g0017560.01"/>
    <property type="gene ID" value="OsPr106_09g0017560"/>
</dbReference>
<dbReference type="HOGENOM" id="CLU_079213_0_0_1"/>
<dbReference type="OMA" id="ACHEQDE"/>
<dbReference type="OrthoDB" id="1922866at2759"/>
<dbReference type="Proteomes" id="UP000007015">
    <property type="component" value="Chromosome 9"/>
</dbReference>
<dbReference type="GO" id="GO:0001763">
    <property type="term" value="P:morphogenesis of a branching structure"/>
    <property type="evidence" value="ECO:0007669"/>
    <property type="project" value="InterPro"/>
</dbReference>
<dbReference type="InterPro" id="IPR044989">
    <property type="entry name" value="TAC1"/>
</dbReference>
<dbReference type="PANTHER" id="PTHR38366">
    <property type="entry name" value="NAD-DEPENDENT PROTEIN DEACETYLASE HST1-LIKE PROTEIN"/>
    <property type="match status" value="1"/>
</dbReference>
<dbReference type="PANTHER" id="PTHR38366:SF1">
    <property type="entry name" value="PROTEIN TILLER ANGLE CONTROL 1"/>
    <property type="match status" value="1"/>
</dbReference>
<reference key="1">
    <citation type="journal article" date="2009" name="Plant Breed.">
        <title>Isolation and functional analysis of the gene controlling the stub-spreading trait in rice (Oryza sativa L.).</title>
        <authorList>
            <person name="Komori T."/>
            <person name="Miyata M."/>
            <person name="Yamamoto T."/>
            <person name="Nitta N."/>
            <person name="Hiei Y."/>
            <person name="Yano M."/>
            <person name="Ueki J."/>
            <person name="Komari T."/>
        </authorList>
        <dbReference type="AGRICOLA" id="IND44292047"/>
    </citation>
    <scope>NUCLEOTIDE SEQUENCE [GENOMIC DNA / MRNA]</scope>
</reference>
<reference key="2">
    <citation type="journal article" date="2005" name="PLoS Biol.">
        <title>The genomes of Oryza sativa: a history of duplications.</title>
        <authorList>
            <person name="Yu J."/>
            <person name="Wang J."/>
            <person name="Lin W."/>
            <person name="Li S."/>
            <person name="Li H."/>
            <person name="Zhou J."/>
            <person name="Ni P."/>
            <person name="Dong W."/>
            <person name="Hu S."/>
            <person name="Zeng C."/>
            <person name="Zhang J."/>
            <person name="Zhang Y."/>
            <person name="Li R."/>
            <person name="Xu Z."/>
            <person name="Li S."/>
            <person name="Li X."/>
            <person name="Zheng H."/>
            <person name="Cong L."/>
            <person name="Lin L."/>
            <person name="Yin J."/>
            <person name="Geng J."/>
            <person name="Li G."/>
            <person name="Shi J."/>
            <person name="Liu J."/>
            <person name="Lv H."/>
            <person name="Li J."/>
            <person name="Wang J."/>
            <person name="Deng Y."/>
            <person name="Ran L."/>
            <person name="Shi X."/>
            <person name="Wang X."/>
            <person name="Wu Q."/>
            <person name="Li C."/>
            <person name="Ren X."/>
            <person name="Wang J."/>
            <person name="Wang X."/>
            <person name="Li D."/>
            <person name="Liu D."/>
            <person name="Zhang X."/>
            <person name="Ji Z."/>
            <person name="Zhao W."/>
            <person name="Sun Y."/>
            <person name="Zhang Z."/>
            <person name="Bao J."/>
            <person name="Han Y."/>
            <person name="Dong L."/>
            <person name="Ji J."/>
            <person name="Chen P."/>
            <person name="Wu S."/>
            <person name="Liu J."/>
            <person name="Xiao Y."/>
            <person name="Bu D."/>
            <person name="Tan J."/>
            <person name="Yang L."/>
            <person name="Ye C."/>
            <person name="Zhang J."/>
            <person name="Xu J."/>
            <person name="Zhou Y."/>
            <person name="Yu Y."/>
            <person name="Zhang B."/>
            <person name="Zhuang S."/>
            <person name="Wei H."/>
            <person name="Liu B."/>
            <person name="Lei M."/>
            <person name="Yu H."/>
            <person name="Li Y."/>
            <person name="Xu H."/>
            <person name="Wei S."/>
            <person name="He X."/>
            <person name="Fang L."/>
            <person name="Zhang Z."/>
            <person name="Zhang Y."/>
            <person name="Huang X."/>
            <person name="Su Z."/>
            <person name="Tong W."/>
            <person name="Li J."/>
            <person name="Tong Z."/>
            <person name="Li S."/>
            <person name="Ye J."/>
            <person name="Wang L."/>
            <person name="Fang L."/>
            <person name="Lei T."/>
            <person name="Chen C.-S."/>
            <person name="Chen H.-C."/>
            <person name="Xu Z."/>
            <person name="Li H."/>
            <person name="Huang H."/>
            <person name="Zhang F."/>
            <person name="Xu H."/>
            <person name="Li N."/>
            <person name="Zhao C."/>
            <person name="Li S."/>
            <person name="Dong L."/>
            <person name="Huang Y."/>
            <person name="Li L."/>
            <person name="Xi Y."/>
            <person name="Qi Q."/>
            <person name="Li W."/>
            <person name="Zhang B."/>
            <person name="Hu W."/>
            <person name="Zhang Y."/>
            <person name="Tian X."/>
            <person name="Jiao Y."/>
            <person name="Liang X."/>
            <person name="Jin J."/>
            <person name="Gao L."/>
            <person name="Zheng W."/>
            <person name="Hao B."/>
            <person name="Liu S.-M."/>
            <person name="Wang W."/>
            <person name="Yuan L."/>
            <person name="Cao M."/>
            <person name="McDermott J."/>
            <person name="Samudrala R."/>
            <person name="Wang J."/>
            <person name="Wong G.K.-S."/>
            <person name="Yang H."/>
        </authorList>
    </citation>
    <scope>NUCLEOTIDE SEQUENCE [LARGE SCALE GENOMIC DNA]</scope>
    <source>
        <strain>cv. 93-11</strain>
    </source>
</reference>
<proteinExistence type="evidence at transcript level"/>
<protein>
    <recommendedName>
        <fullName evidence="4">Protein TILLER ANGLE CONTROL 1</fullName>
    </recommendedName>
    <alternativeName>
        <fullName evidence="3">Protein SPREADING TYPE OF KASALATH</fullName>
    </alternativeName>
</protein>
<name>TAC1_ORYSI</name>
<evidence type="ECO:0000256" key="1">
    <source>
        <dbReference type="SAM" id="MobiDB-lite"/>
    </source>
</evidence>
<evidence type="ECO:0000269" key="2">
    <source ref="1"/>
</evidence>
<evidence type="ECO:0000303" key="3">
    <source ref="1"/>
</evidence>
<evidence type="ECO:0000305" key="4"/>
<evidence type="ECO:0000312" key="5">
    <source>
        <dbReference type="EMBL" id="EEC84922.1"/>
    </source>
</evidence>
<comment type="function">
    <text evidence="2 4">Involved in the regulation of tiller growth angle (Ref.1). Promotes horizontal shoot growth (Ref.1). TAC1 and LAZY1 play opposite functions in the regulation of tiller growth angle (Probable).</text>
</comment>
<comment type="tissue specificity">
    <text evidence="2">Expressed in the basal part of seedlings.</text>
</comment>
<comment type="similarity">
    <text evidence="4">Belongs to the TAC family.</text>
</comment>
<feature type="chain" id="PRO_0000451026" description="Protein TILLER ANGLE CONTROL 1">
    <location>
        <begin position="1"/>
        <end position="259"/>
    </location>
</feature>
<feature type="region of interest" description="Disordered" evidence="1">
    <location>
        <begin position="96"/>
        <end position="123"/>
    </location>
</feature>
<feature type="region of interest" description="Disordered" evidence="1">
    <location>
        <begin position="206"/>
        <end position="226"/>
    </location>
</feature>
<feature type="region of interest" description="Disordered" evidence="1">
    <location>
        <begin position="239"/>
        <end position="259"/>
    </location>
</feature>
<feature type="short sequence motif" description="IGT motif" evidence="4">
    <location>
        <begin position="56"/>
        <end position="62"/>
    </location>
</feature>
<feature type="compositionally biased region" description="Low complexity" evidence="1">
    <location>
        <begin position="109"/>
        <end position="119"/>
    </location>
</feature>
<accession>Q66V57</accession>
<sequence>MALKVFNWLNRKKHSNVEYCTINENKAMEEKEDSLRASVTEQDTEALLLRDVLINGILAIGTLGHNVNSLCPESCIEQDEPIIMCDEKVEQEKCEEEKAEAKQDTPVTAPSEPASALEPAKMHSSSMKEDNFMCFVKEEILMHGMEVEDVPNIQERPLLMLEKVEKVRTTLADLFAAEAFSSSDAEDKCYPKIVIVAGASTSKPTSCMEKMHHKKPTKPTSKPLKATRKLSRVMRKMLGKKIHPEQLNGRSNAEGPVTA</sequence>
<organism>
    <name type="scientific">Oryza sativa subsp. indica</name>
    <name type="common">Rice</name>
    <dbReference type="NCBI Taxonomy" id="39946"/>
    <lineage>
        <taxon>Eukaryota</taxon>
        <taxon>Viridiplantae</taxon>
        <taxon>Streptophyta</taxon>
        <taxon>Embryophyta</taxon>
        <taxon>Tracheophyta</taxon>
        <taxon>Spermatophyta</taxon>
        <taxon>Magnoliopsida</taxon>
        <taxon>Liliopsida</taxon>
        <taxon>Poales</taxon>
        <taxon>Poaceae</taxon>
        <taxon>BOP clade</taxon>
        <taxon>Oryzoideae</taxon>
        <taxon>Oryzeae</taxon>
        <taxon>Oryzinae</taxon>
        <taxon>Oryza</taxon>
        <taxon>Oryza sativa</taxon>
    </lineage>
</organism>
<gene>
    <name evidence="4" type="primary">TAC1</name>
    <name evidence="3" type="synonym">SPK</name>
    <name evidence="5" type="ORF">OsI_32126</name>
</gene>